<organism>
    <name type="scientific">Oryza sativa subsp. japonica</name>
    <name type="common">Rice</name>
    <dbReference type="NCBI Taxonomy" id="39947"/>
    <lineage>
        <taxon>Eukaryota</taxon>
        <taxon>Viridiplantae</taxon>
        <taxon>Streptophyta</taxon>
        <taxon>Embryophyta</taxon>
        <taxon>Tracheophyta</taxon>
        <taxon>Spermatophyta</taxon>
        <taxon>Magnoliopsida</taxon>
        <taxon>Liliopsida</taxon>
        <taxon>Poales</taxon>
        <taxon>Poaceae</taxon>
        <taxon>BOP clade</taxon>
        <taxon>Oryzoideae</taxon>
        <taxon>Oryzeae</taxon>
        <taxon>Oryzinae</taxon>
        <taxon>Oryza</taxon>
        <taxon>Oryza sativa</taxon>
    </lineage>
</organism>
<reference key="1">
    <citation type="journal article" date="2002" name="Nature">
        <title>The genome sequence and structure of rice chromosome 1.</title>
        <authorList>
            <person name="Sasaki T."/>
            <person name="Matsumoto T."/>
            <person name="Yamamoto K."/>
            <person name="Sakata K."/>
            <person name="Baba T."/>
            <person name="Katayose Y."/>
            <person name="Wu J."/>
            <person name="Niimura Y."/>
            <person name="Cheng Z."/>
            <person name="Nagamura Y."/>
            <person name="Antonio B.A."/>
            <person name="Kanamori H."/>
            <person name="Hosokawa S."/>
            <person name="Masukawa M."/>
            <person name="Arikawa K."/>
            <person name="Chiden Y."/>
            <person name="Hayashi M."/>
            <person name="Okamoto M."/>
            <person name="Ando T."/>
            <person name="Aoki H."/>
            <person name="Arita K."/>
            <person name="Hamada M."/>
            <person name="Harada C."/>
            <person name="Hijishita S."/>
            <person name="Honda M."/>
            <person name="Ichikawa Y."/>
            <person name="Idonuma A."/>
            <person name="Iijima M."/>
            <person name="Ikeda M."/>
            <person name="Ikeno M."/>
            <person name="Ito S."/>
            <person name="Ito T."/>
            <person name="Ito Y."/>
            <person name="Ito Y."/>
            <person name="Iwabuchi A."/>
            <person name="Kamiya K."/>
            <person name="Karasawa W."/>
            <person name="Katagiri S."/>
            <person name="Kikuta A."/>
            <person name="Kobayashi N."/>
            <person name="Kono I."/>
            <person name="Machita K."/>
            <person name="Maehara T."/>
            <person name="Mizuno H."/>
            <person name="Mizubayashi T."/>
            <person name="Mukai Y."/>
            <person name="Nagasaki H."/>
            <person name="Nakashima M."/>
            <person name="Nakama Y."/>
            <person name="Nakamichi Y."/>
            <person name="Nakamura M."/>
            <person name="Namiki N."/>
            <person name="Negishi M."/>
            <person name="Ohta I."/>
            <person name="Ono N."/>
            <person name="Saji S."/>
            <person name="Sakai K."/>
            <person name="Shibata M."/>
            <person name="Shimokawa T."/>
            <person name="Shomura A."/>
            <person name="Song J."/>
            <person name="Takazaki Y."/>
            <person name="Terasawa K."/>
            <person name="Tsuji K."/>
            <person name="Waki K."/>
            <person name="Yamagata H."/>
            <person name="Yamane H."/>
            <person name="Yoshiki S."/>
            <person name="Yoshihara R."/>
            <person name="Yukawa K."/>
            <person name="Zhong H."/>
            <person name="Iwama H."/>
            <person name="Endo T."/>
            <person name="Ito H."/>
            <person name="Hahn J.H."/>
            <person name="Kim H.-I."/>
            <person name="Eun M.-Y."/>
            <person name="Yano M."/>
            <person name="Jiang J."/>
            <person name="Gojobori T."/>
        </authorList>
    </citation>
    <scope>NUCLEOTIDE SEQUENCE [LARGE SCALE GENOMIC DNA]</scope>
    <source>
        <strain>cv. Nipponbare</strain>
    </source>
</reference>
<reference key="2">
    <citation type="journal article" date="2005" name="Nature">
        <title>The map-based sequence of the rice genome.</title>
        <authorList>
            <consortium name="International rice genome sequencing project (IRGSP)"/>
        </authorList>
    </citation>
    <scope>NUCLEOTIDE SEQUENCE [LARGE SCALE GENOMIC DNA]</scope>
    <source>
        <strain>cv. Nipponbare</strain>
    </source>
</reference>
<reference key="3">
    <citation type="journal article" date="2008" name="Nucleic Acids Res.">
        <title>The rice annotation project database (RAP-DB): 2008 update.</title>
        <authorList>
            <consortium name="The rice annotation project (RAP)"/>
        </authorList>
    </citation>
    <scope>GENOME REANNOTATION</scope>
    <source>
        <strain>cv. Nipponbare</strain>
    </source>
</reference>
<reference key="4">
    <citation type="journal article" date="2013" name="Rice">
        <title>Improvement of the Oryza sativa Nipponbare reference genome using next generation sequence and optical map data.</title>
        <authorList>
            <person name="Kawahara Y."/>
            <person name="de la Bastide M."/>
            <person name="Hamilton J.P."/>
            <person name="Kanamori H."/>
            <person name="McCombie W.R."/>
            <person name="Ouyang S."/>
            <person name="Schwartz D.C."/>
            <person name="Tanaka T."/>
            <person name="Wu J."/>
            <person name="Zhou S."/>
            <person name="Childs K.L."/>
            <person name="Davidson R.M."/>
            <person name="Lin H."/>
            <person name="Quesada-Ocampo L."/>
            <person name="Vaillancourt B."/>
            <person name="Sakai H."/>
            <person name="Lee S.S."/>
            <person name="Kim J."/>
            <person name="Numa H."/>
            <person name="Itoh T."/>
            <person name="Buell C.R."/>
            <person name="Matsumoto T."/>
        </authorList>
    </citation>
    <scope>GENOME REANNOTATION</scope>
    <source>
        <strain>cv. Nipponbare</strain>
    </source>
</reference>
<reference key="5">
    <citation type="journal article" date="2005" name="PLoS Biol.">
        <title>The genomes of Oryza sativa: a history of duplications.</title>
        <authorList>
            <person name="Yu J."/>
            <person name="Wang J."/>
            <person name="Lin W."/>
            <person name="Li S."/>
            <person name="Li H."/>
            <person name="Zhou J."/>
            <person name="Ni P."/>
            <person name="Dong W."/>
            <person name="Hu S."/>
            <person name="Zeng C."/>
            <person name="Zhang J."/>
            <person name="Zhang Y."/>
            <person name="Li R."/>
            <person name="Xu Z."/>
            <person name="Li S."/>
            <person name="Li X."/>
            <person name="Zheng H."/>
            <person name="Cong L."/>
            <person name="Lin L."/>
            <person name="Yin J."/>
            <person name="Geng J."/>
            <person name="Li G."/>
            <person name="Shi J."/>
            <person name="Liu J."/>
            <person name="Lv H."/>
            <person name="Li J."/>
            <person name="Wang J."/>
            <person name="Deng Y."/>
            <person name="Ran L."/>
            <person name="Shi X."/>
            <person name="Wang X."/>
            <person name="Wu Q."/>
            <person name="Li C."/>
            <person name="Ren X."/>
            <person name="Wang J."/>
            <person name="Wang X."/>
            <person name="Li D."/>
            <person name="Liu D."/>
            <person name="Zhang X."/>
            <person name="Ji Z."/>
            <person name="Zhao W."/>
            <person name="Sun Y."/>
            <person name="Zhang Z."/>
            <person name="Bao J."/>
            <person name="Han Y."/>
            <person name="Dong L."/>
            <person name="Ji J."/>
            <person name="Chen P."/>
            <person name="Wu S."/>
            <person name="Liu J."/>
            <person name="Xiao Y."/>
            <person name="Bu D."/>
            <person name="Tan J."/>
            <person name="Yang L."/>
            <person name="Ye C."/>
            <person name="Zhang J."/>
            <person name="Xu J."/>
            <person name="Zhou Y."/>
            <person name="Yu Y."/>
            <person name="Zhang B."/>
            <person name="Zhuang S."/>
            <person name="Wei H."/>
            <person name="Liu B."/>
            <person name="Lei M."/>
            <person name="Yu H."/>
            <person name="Li Y."/>
            <person name="Xu H."/>
            <person name="Wei S."/>
            <person name="He X."/>
            <person name="Fang L."/>
            <person name="Zhang Z."/>
            <person name="Zhang Y."/>
            <person name="Huang X."/>
            <person name="Su Z."/>
            <person name="Tong W."/>
            <person name="Li J."/>
            <person name="Tong Z."/>
            <person name="Li S."/>
            <person name="Ye J."/>
            <person name="Wang L."/>
            <person name="Fang L."/>
            <person name="Lei T."/>
            <person name="Chen C.-S."/>
            <person name="Chen H.-C."/>
            <person name="Xu Z."/>
            <person name="Li H."/>
            <person name="Huang H."/>
            <person name="Zhang F."/>
            <person name="Xu H."/>
            <person name="Li N."/>
            <person name="Zhao C."/>
            <person name="Li S."/>
            <person name="Dong L."/>
            <person name="Huang Y."/>
            <person name="Li L."/>
            <person name="Xi Y."/>
            <person name="Qi Q."/>
            <person name="Li W."/>
            <person name="Zhang B."/>
            <person name="Hu W."/>
            <person name="Zhang Y."/>
            <person name="Tian X."/>
            <person name="Jiao Y."/>
            <person name="Liang X."/>
            <person name="Jin J."/>
            <person name="Gao L."/>
            <person name="Zheng W."/>
            <person name="Hao B."/>
            <person name="Liu S.-M."/>
            <person name="Wang W."/>
            <person name="Yuan L."/>
            <person name="Cao M."/>
            <person name="McDermott J."/>
            <person name="Samudrala R."/>
            <person name="Wang J."/>
            <person name="Wong G.K.-S."/>
            <person name="Yang H."/>
        </authorList>
    </citation>
    <scope>NUCLEOTIDE SEQUENCE [LARGE SCALE GENOMIC DNA]</scope>
    <source>
        <strain>cv. Nipponbare</strain>
    </source>
</reference>
<reference key="6">
    <citation type="journal article" date="2003" name="Science">
        <title>Collection, mapping, and annotation of over 28,000 cDNA clones from japonica rice.</title>
        <authorList>
            <consortium name="The rice full-length cDNA consortium"/>
        </authorList>
    </citation>
    <scope>NUCLEOTIDE SEQUENCE [LARGE SCALE MRNA]</scope>
    <source>
        <strain>cv. Nipponbare</strain>
    </source>
</reference>
<reference key="7">
    <citation type="journal article" date="2004" name="Plant Physiol.">
        <title>Calcium sensors and their interacting protein kinases: genomics of the Arabidopsis and rice CBL-CIPK signaling networks.</title>
        <authorList>
            <person name="Kolukisaoglu U."/>
            <person name="Weinl S."/>
            <person name="Blazevic D."/>
            <person name="Batistic O."/>
            <person name="Kudla J."/>
        </authorList>
    </citation>
    <scope>GENE FAMILY</scope>
    <scope>NOMENCLATURE</scope>
</reference>
<reference key="8">
    <citation type="journal article" date="2007" name="Plant Physiol.">
        <title>Characterization of stress-responsive CIPK genes in rice for stress tolerance improvement.</title>
        <authorList>
            <person name="Xiang Y."/>
            <person name="Huang Y."/>
            <person name="Xiong L."/>
        </authorList>
    </citation>
    <scope>INDUCTION</scope>
</reference>
<comment type="function">
    <text evidence="1">CIPK serine-threonine protein kinases interact with CBL proteins. Binding of a CBL protein to the regulatory NAF domain of CIPK protein lead to the activation of the kinase in a calcium-dependent manner (By similarity).</text>
</comment>
<comment type="catalytic activity">
    <reaction>
        <text>L-seryl-[protein] + ATP = O-phospho-L-seryl-[protein] + ADP + H(+)</text>
        <dbReference type="Rhea" id="RHEA:17989"/>
        <dbReference type="Rhea" id="RHEA-COMP:9863"/>
        <dbReference type="Rhea" id="RHEA-COMP:11604"/>
        <dbReference type="ChEBI" id="CHEBI:15378"/>
        <dbReference type="ChEBI" id="CHEBI:29999"/>
        <dbReference type="ChEBI" id="CHEBI:30616"/>
        <dbReference type="ChEBI" id="CHEBI:83421"/>
        <dbReference type="ChEBI" id="CHEBI:456216"/>
        <dbReference type="EC" id="2.7.11.1"/>
    </reaction>
</comment>
<comment type="catalytic activity">
    <reaction>
        <text>L-threonyl-[protein] + ATP = O-phospho-L-threonyl-[protein] + ADP + H(+)</text>
        <dbReference type="Rhea" id="RHEA:46608"/>
        <dbReference type="Rhea" id="RHEA-COMP:11060"/>
        <dbReference type="Rhea" id="RHEA-COMP:11605"/>
        <dbReference type="ChEBI" id="CHEBI:15378"/>
        <dbReference type="ChEBI" id="CHEBI:30013"/>
        <dbReference type="ChEBI" id="CHEBI:30616"/>
        <dbReference type="ChEBI" id="CHEBI:61977"/>
        <dbReference type="ChEBI" id="CHEBI:456216"/>
        <dbReference type="EC" id="2.7.11.1"/>
    </reaction>
</comment>
<comment type="cofactor">
    <cofactor evidence="1">
        <name>Mn(2+)</name>
        <dbReference type="ChEBI" id="CHEBI:29035"/>
    </cofactor>
</comment>
<comment type="induction">
    <text evidence="6">By drought and salt stresses and abscisic acid (ABA).</text>
</comment>
<comment type="domain">
    <text evidence="1">The activation loop within the kinase domain is the target of phosphorylation/activation by upstream protein kinases. The PPI motif mediates the interaction with the ABI (abscisic acid-insensitive) phosphatases (By similarity).</text>
</comment>
<comment type="similarity">
    <text evidence="7">Belongs to the protein kinase superfamily. CAMK Ser/Thr protein kinase family. SNF1 subfamily.</text>
</comment>
<comment type="sequence caution" evidence="7">
    <conflict type="erroneous initiation">
        <sequence resource="EMBL-CDS" id="BAB61199"/>
    </conflict>
</comment>
<comment type="sequence caution" evidence="7">
    <conflict type="erroneous initiation">
        <sequence resource="EMBL-CDS" id="EAZ13608"/>
    </conflict>
</comment>
<accession>Q5JLQ9</accession>
<accession>B7EG29</accession>
<accession>Q94DT7</accession>
<evidence type="ECO:0000250" key="1"/>
<evidence type="ECO:0000255" key="2">
    <source>
        <dbReference type="PROSITE-ProRule" id="PRU00159"/>
    </source>
</evidence>
<evidence type="ECO:0000255" key="3">
    <source>
        <dbReference type="PROSITE-ProRule" id="PRU00256"/>
    </source>
</evidence>
<evidence type="ECO:0000255" key="4">
    <source>
        <dbReference type="PROSITE-ProRule" id="PRU10027"/>
    </source>
</evidence>
<evidence type="ECO:0000256" key="5">
    <source>
        <dbReference type="SAM" id="MobiDB-lite"/>
    </source>
</evidence>
<evidence type="ECO:0000269" key="6">
    <source>
    </source>
</evidence>
<evidence type="ECO:0000305" key="7"/>
<sequence length="476" mass="53563">MAMETTSQDSQVIMGRYKLGRLLGRGTFAKVYKAYKLATGEAVAIKVFDKEAVQRSGTVEQVKREVDVMRRVHHRHVIRLHEVMATRSRIYFVMEYASGGELFTRLSRSPRFPEPVARRYFQQLITAVEFCHSRGVYHRDLKPENLLLDARGDLKVTDFGLSALDGGLRGDGLLHTTCGTPAYVAPEVLLKRGYDGAKADIWSCGVILFVLLAGYLPFNETNLVILYRNITESNYRCPPWFSVEARKLLARLLDPNPKTRITISKIMDRPWFQQATCPLGDMSLVASAPSVLLARKEASQQHDDEEDDGFAREKKKRSNVIMSSPVIDVRPSSMNAFDIISRSRGLDLSKMFDAEERRSEARFSTRETTTAIVSKLEEIAEAGRFSFKLKEKGRVELEGSQDGRKGALAIEAEIFKVAPEVHVVEVRKTGGDSPDFRDFYKQELKPSLGDMVWAWQGGDSPPLVPAAGRRPITKRS</sequence>
<protein>
    <recommendedName>
        <fullName>CBL-interacting protein kinase 30</fullName>
        <ecNumber>2.7.11.1</ecNumber>
    </recommendedName>
    <alternativeName>
        <fullName>OsCIPK30</fullName>
    </alternativeName>
</protein>
<name>CIPKU_ORYSJ</name>
<feature type="chain" id="PRO_0000338388" description="CBL-interacting protein kinase 30">
    <location>
        <begin position="1"/>
        <end position="476"/>
    </location>
</feature>
<feature type="domain" description="Protein kinase" evidence="2">
    <location>
        <begin position="17"/>
        <end position="272"/>
    </location>
</feature>
<feature type="domain" description="NAF" evidence="3">
    <location>
        <begin position="299"/>
        <end position="353"/>
    </location>
</feature>
<feature type="region of interest" description="Activation loop" evidence="1">
    <location>
        <begin position="158"/>
        <end position="187"/>
    </location>
</feature>
<feature type="region of interest" description="Disordered" evidence="5">
    <location>
        <begin position="296"/>
        <end position="315"/>
    </location>
</feature>
<feature type="region of interest" description="PPI" evidence="1">
    <location>
        <begin position="358"/>
        <end position="387"/>
    </location>
</feature>
<feature type="active site" description="Proton acceptor" evidence="2 4">
    <location>
        <position position="140"/>
    </location>
</feature>
<feature type="binding site" evidence="2">
    <location>
        <begin position="23"/>
        <end position="31"/>
    </location>
    <ligand>
        <name>ATP</name>
        <dbReference type="ChEBI" id="CHEBI:30616"/>
    </ligand>
</feature>
<feature type="binding site" evidence="2">
    <location>
        <position position="46"/>
    </location>
    <ligand>
        <name>ATP</name>
        <dbReference type="ChEBI" id="CHEBI:30616"/>
    </ligand>
</feature>
<proteinExistence type="evidence at transcript level"/>
<dbReference type="EC" id="2.7.11.1"/>
<dbReference type="EMBL" id="AP003256">
    <property type="protein sequence ID" value="BAB61199.1"/>
    <property type="status" value="ALT_INIT"/>
    <property type="molecule type" value="Genomic_DNA"/>
</dbReference>
<dbReference type="EMBL" id="AP003409">
    <property type="protein sequence ID" value="BAD87597.1"/>
    <property type="molecule type" value="Genomic_DNA"/>
</dbReference>
<dbReference type="EMBL" id="AP008207">
    <property type="protein sequence ID" value="BAF06223.1"/>
    <property type="molecule type" value="Genomic_DNA"/>
</dbReference>
<dbReference type="EMBL" id="AP014957">
    <property type="protein sequence ID" value="BAS74439.1"/>
    <property type="molecule type" value="Genomic_DNA"/>
</dbReference>
<dbReference type="EMBL" id="CM000138">
    <property type="protein sequence ID" value="EAZ13608.1"/>
    <property type="status" value="ALT_INIT"/>
    <property type="molecule type" value="Genomic_DNA"/>
</dbReference>
<dbReference type="EMBL" id="AK069231">
    <property type="protein sequence ID" value="BAG91326.1"/>
    <property type="molecule type" value="mRNA"/>
</dbReference>
<dbReference type="EMBL" id="AK100202">
    <property type="protein sequence ID" value="BAG94489.1"/>
    <property type="molecule type" value="mRNA"/>
</dbReference>
<dbReference type="RefSeq" id="XP_015642153.1">
    <property type="nucleotide sequence ID" value="XM_015786667.1"/>
</dbReference>
<dbReference type="SMR" id="Q5JLQ9"/>
<dbReference type="FunCoup" id="Q5JLQ9">
    <property type="interactions" value="133"/>
</dbReference>
<dbReference type="STRING" id="39947.Q5JLQ9"/>
<dbReference type="PaxDb" id="39947-Q5JLQ9"/>
<dbReference type="EnsemblPlants" id="Os01t0759200-01">
    <property type="protein sequence ID" value="Os01t0759200-01"/>
    <property type="gene ID" value="Os01g0759200"/>
</dbReference>
<dbReference type="Gramene" id="Os01t0759200-01">
    <property type="protein sequence ID" value="Os01t0759200-01"/>
    <property type="gene ID" value="Os01g0759200"/>
</dbReference>
<dbReference type="KEGG" id="dosa:Os01g0759200"/>
<dbReference type="eggNOG" id="KOG0583">
    <property type="taxonomic scope" value="Eukaryota"/>
</dbReference>
<dbReference type="HOGENOM" id="CLU_000288_59_0_1"/>
<dbReference type="InParanoid" id="Q5JLQ9"/>
<dbReference type="OMA" id="NYRCPPW"/>
<dbReference type="OrthoDB" id="539158at2759"/>
<dbReference type="Proteomes" id="UP000000763">
    <property type="component" value="Chromosome 1"/>
</dbReference>
<dbReference type="Proteomes" id="UP000007752">
    <property type="component" value="Chromosome 1"/>
</dbReference>
<dbReference type="Proteomes" id="UP000059680">
    <property type="component" value="Chromosome 1"/>
</dbReference>
<dbReference type="GO" id="GO:0005524">
    <property type="term" value="F:ATP binding"/>
    <property type="evidence" value="ECO:0007669"/>
    <property type="project" value="UniProtKB-KW"/>
</dbReference>
<dbReference type="GO" id="GO:0106310">
    <property type="term" value="F:protein serine kinase activity"/>
    <property type="evidence" value="ECO:0007669"/>
    <property type="project" value="RHEA"/>
</dbReference>
<dbReference type="GO" id="GO:0004674">
    <property type="term" value="F:protein serine/threonine kinase activity"/>
    <property type="evidence" value="ECO:0000318"/>
    <property type="project" value="GO_Central"/>
</dbReference>
<dbReference type="GO" id="GO:0007165">
    <property type="term" value="P:signal transduction"/>
    <property type="evidence" value="ECO:0000318"/>
    <property type="project" value="GO_Central"/>
</dbReference>
<dbReference type="CDD" id="cd12195">
    <property type="entry name" value="CIPK_C"/>
    <property type="match status" value="1"/>
</dbReference>
<dbReference type="FunFam" id="3.30.200.20:FF:000042">
    <property type="entry name" value="Aurora kinase A"/>
    <property type="match status" value="1"/>
</dbReference>
<dbReference type="FunFam" id="1.10.510.10:FF:000279">
    <property type="entry name" value="Non-specific serine/threonine protein kinase"/>
    <property type="match status" value="1"/>
</dbReference>
<dbReference type="FunFam" id="3.30.310.80:FF:000005">
    <property type="entry name" value="Non-specific serine/threonine protein kinase"/>
    <property type="match status" value="1"/>
</dbReference>
<dbReference type="Gene3D" id="3.30.310.80">
    <property type="entry name" value="Kinase associated domain 1, KA1"/>
    <property type="match status" value="1"/>
</dbReference>
<dbReference type="Gene3D" id="1.10.510.10">
    <property type="entry name" value="Transferase(Phosphotransferase) domain 1"/>
    <property type="match status" value="1"/>
</dbReference>
<dbReference type="InterPro" id="IPR011009">
    <property type="entry name" value="Kinase-like_dom_sf"/>
</dbReference>
<dbReference type="InterPro" id="IPR018451">
    <property type="entry name" value="NAF/FISL_domain"/>
</dbReference>
<dbReference type="InterPro" id="IPR004041">
    <property type="entry name" value="NAF_dom"/>
</dbReference>
<dbReference type="InterPro" id="IPR000719">
    <property type="entry name" value="Prot_kinase_dom"/>
</dbReference>
<dbReference type="InterPro" id="IPR017441">
    <property type="entry name" value="Protein_kinase_ATP_BS"/>
</dbReference>
<dbReference type="InterPro" id="IPR008271">
    <property type="entry name" value="Ser/Thr_kinase_AS"/>
</dbReference>
<dbReference type="PANTHER" id="PTHR43895">
    <property type="entry name" value="CALCIUM/CALMODULIN-DEPENDENT PROTEIN KINASE KINASE-RELATED"/>
    <property type="match status" value="1"/>
</dbReference>
<dbReference type="PANTHER" id="PTHR43895:SF7">
    <property type="entry name" value="CBL-INTERACTING PROTEIN KINASE 30"/>
    <property type="match status" value="1"/>
</dbReference>
<dbReference type="Pfam" id="PF03822">
    <property type="entry name" value="NAF"/>
    <property type="match status" value="1"/>
</dbReference>
<dbReference type="Pfam" id="PF00069">
    <property type="entry name" value="Pkinase"/>
    <property type="match status" value="1"/>
</dbReference>
<dbReference type="SMART" id="SM00220">
    <property type="entry name" value="S_TKc"/>
    <property type="match status" value="1"/>
</dbReference>
<dbReference type="SUPFAM" id="SSF56112">
    <property type="entry name" value="Protein kinase-like (PK-like)"/>
    <property type="match status" value="1"/>
</dbReference>
<dbReference type="PROSITE" id="PS50816">
    <property type="entry name" value="NAF"/>
    <property type="match status" value="1"/>
</dbReference>
<dbReference type="PROSITE" id="PS00107">
    <property type="entry name" value="PROTEIN_KINASE_ATP"/>
    <property type="match status" value="1"/>
</dbReference>
<dbReference type="PROSITE" id="PS50011">
    <property type="entry name" value="PROTEIN_KINASE_DOM"/>
    <property type="match status" value="1"/>
</dbReference>
<dbReference type="PROSITE" id="PS00108">
    <property type="entry name" value="PROTEIN_KINASE_ST"/>
    <property type="match status" value="1"/>
</dbReference>
<keyword id="KW-0067">ATP-binding</keyword>
<keyword id="KW-0418">Kinase</keyword>
<keyword id="KW-0464">Manganese</keyword>
<keyword id="KW-0547">Nucleotide-binding</keyword>
<keyword id="KW-1185">Reference proteome</keyword>
<keyword id="KW-0723">Serine/threonine-protein kinase</keyword>
<keyword id="KW-0808">Transferase</keyword>
<gene>
    <name type="primary">CIPK30</name>
    <name type="ordered locus">Os01g0759200</name>
    <name type="ordered locus">LOC_Os01g55440</name>
    <name type="ORF">B1131G08.36</name>
    <name type="ORF">OsJ_003433</name>
    <name type="ORF">P0460E08.7</name>
</gene>